<name>BBS5_XENLA</name>
<reference key="1">
    <citation type="submission" date="2004-08" db="EMBL/GenBank/DDBJ databases">
        <authorList>
            <consortium name="NIH - Xenopus Gene Collection (XGC) project"/>
        </authorList>
    </citation>
    <scope>NUCLEOTIDE SEQUENCE [LARGE SCALE MRNA]</scope>
    <source>
        <tissue>Embryo</tissue>
    </source>
</reference>
<comment type="function">
    <text evidence="1">Required for ciliogenesis.</text>
</comment>
<comment type="subunit">
    <text evidence="2">Part of BBSome complex.</text>
</comment>
<comment type="subcellular location">
    <subcellularLocation>
        <location evidence="1">Cell projection</location>
        <location evidence="1">Cilium membrane</location>
    </subcellularLocation>
    <subcellularLocation>
        <location evidence="1">Cytoplasm</location>
        <location evidence="1">Cytoskeleton</location>
        <location evidence="1">Microtubule organizing center</location>
        <location evidence="1">Centrosome</location>
        <location evidence="1">Centriolar satellite</location>
    </subcellularLocation>
</comment>
<comment type="similarity">
    <text evidence="3">Belongs to the BBS5 family.</text>
</comment>
<gene>
    <name type="primary">bbs5</name>
</gene>
<sequence length="365" mass="41897">MLSVLDALWEDRDVRFDISPQQMKMRPGEVLIDCLDSIEDTKGNNGDRGRLLVTNLRVIWHSLALPRVNLAVGYNCIINITTRTANSKLRGQTEALYILTKCNNTRFEFIFTNLVPGSPRLFTSVIAVHRAYETSKMYRDLKLRGALIQNKQLKLLPREQVYDKINGVWNLSSDQGNLGTFFITNVRIVWHANMNDSFNVSIPYLQIRSIKIRDSKFGLALVIESSQQSGGYVLGFKIDPVEKLQDSVKEINSLHRVYSASPIFGVEYEMEEKPQALEELTIEQVQDDVEIEADEHTDAFVVSRLSRISYFTRQIIYILIFTRMYSGWFHHSLTKLHGSIRFNSVTIAADFLYIYISQNGTKIVK</sequence>
<dbReference type="EMBL" id="BC081218">
    <property type="protein sequence ID" value="AAH81218.1"/>
    <property type="molecule type" value="mRNA"/>
</dbReference>
<dbReference type="RefSeq" id="NP_001087782.1">
    <property type="nucleotide sequence ID" value="NM_001094313.2"/>
</dbReference>
<dbReference type="SMR" id="Q66IS6"/>
<dbReference type="DNASU" id="447606"/>
<dbReference type="GeneID" id="447606"/>
<dbReference type="KEGG" id="xla:447606"/>
<dbReference type="AGR" id="Xenbase:XB-GENE-965970"/>
<dbReference type="CTD" id="447606"/>
<dbReference type="Xenbase" id="XB-GENE-965970">
    <property type="gene designation" value="bbs5.L"/>
</dbReference>
<dbReference type="OrthoDB" id="10261999at2759"/>
<dbReference type="Proteomes" id="UP000186698">
    <property type="component" value="Chromosome 9_10L"/>
</dbReference>
<dbReference type="Bgee" id="447606">
    <property type="expression patterns" value="Expressed in intestine and 19 other cell types or tissues"/>
</dbReference>
<dbReference type="GO" id="GO:0034464">
    <property type="term" value="C:BBSome"/>
    <property type="evidence" value="ECO:0000318"/>
    <property type="project" value="GO_Central"/>
</dbReference>
<dbReference type="GO" id="GO:0034451">
    <property type="term" value="C:centriolar satellite"/>
    <property type="evidence" value="ECO:0007669"/>
    <property type="project" value="UniProtKB-SubCell"/>
</dbReference>
<dbReference type="GO" id="GO:0036064">
    <property type="term" value="C:ciliary basal body"/>
    <property type="evidence" value="ECO:0000318"/>
    <property type="project" value="GO_Central"/>
</dbReference>
<dbReference type="GO" id="GO:0060170">
    <property type="term" value="C:ciliary membrane"/>
    <property type="evidence" value="ECO:0007669"/>
    <property type="project" value="UniProtKB-SubCell"/>
</dbReference>
<dbReference type="GO" id="GO:0005737">
    <property type="term" value="C:cytoplasm"/>
    <property type="evidence" value="ECO:0007669"/>
    <property type="project" value="UniProtKB-KW"/>
</dbReference>
<dbReference type="GO" id="GO:0032266">
    <property type="term" value="F:phosphatidylinositol-3-phosphate binding"/>
    <property type="evidence" value="ECO:0000318"/>
    <property type="project" value="GO_Central"/>
</dbReference>
<dbReference type="GO" id="GO:0060271">
    <property type="term" value="P:cilium assembly"/>
    <property type="evidence" value="ECO:0000318"/>
    <property type="project" value="GO_Central"/>
</dbReference>
<dbReference type="GO" id="GO:0046907">
    <property type="term" value="P:intracellular transport"/>
    <property type="evidence" value="ECO:0000318"/>
    <property type="project" value="GO_Central"/>
</dbReference>
<dbReference type="CDD" id="cd00900">
    <property type="entry name" value="PH-like"/>
    <property type="match status" value="1"/>
</dbReference>
<dbReference type="FunFam" id="2.30.29.30:FF:000232">
    <property type="entry name" value="Bardet-Biedl syndrome 5 isoform 1"/>
    <property type="match status" value="1"/>
</dbReference>
<dbReference type="Gene3D" id="2.30.29.30">
    <property type="entry name" value="Pleckstrin-homology domain (PH domain)/Phosphotyrosine-binding domain (PTB)"/>
    <property type="match status" value="1"/>
</dbReference>
<dbReference type="InterPro" id="IPR006606">
    <property type="entry name" value="BBL5"/>
</dbReference>
<dbReference type="InterPro" id="IPR030804">
    <property type="entry name" value="BBS5/fem-3"/>
</dbReference>
<dbReference type="InterPro" id="IPR014003">
    <property type="entry name" value="BBS5_PH"/>
</dbReference>
<dbReference type="InterPro" id="IPR011993">
    <property type="entry name" value="PH-like_dom_sf"/>
</dbReference>
<dbReference type="PANTHER" id="PTHR21351:SF0">
    <property type="entry name" value="BARDET-BIEDL SYNDROME 5 PROTEIN"/>
    <property type="match status" value="1"/>
</dbReference>
<dbReference type="PANTHER" id="PTHR21351">
    <property type="entry name" value="BARDET-BIEDL SYNDROME PROTEIN 5"/>
    <property type="match status" value="1"/>
</dbReference>
<dbReference type="Pfam" id="PF07289">
    <property type="entry name" value="BBL5"/>
    <property type="match status" value="1"/>
</dbReference>
<dbReference type="PIRSF" id="PIRSF010072">
    <property type="entry name" value="DUF1448"/>
    <property type="match status" value="1"/>
</dbReference>
<dbReference type="SMART" id="SM00683">
    <property type="entry name" value="DM16"/>
    <property type="match status" value="2"/>
</dbReference>
<accession>Q66IS6</accession>
<keyword id="KW-1003">Cell membrane</keyword>
<keyword id="KW-0966">Cell projection</keyword>
<keyword id="KW-0969">Cilium</keyword>
<keyword id="KW-0963">Cytoplasm</keyword>
<keyword id="KW-0206">Cytoskeleton</keyword>
<keyword id="KW-0472">Membrane</keyword>
<keyword id="KW-1185">Reference proteome</keyword>
<feature type="chain" id="PRO_0000223258" description="BBSome complex member BBS5">
    <location>
        <begin position="1"/>
        <end position="365"/>
    </location>
</feature>
<evidence type="ECO:0000250" key="1"/>
<evidence type="ECO:0000250" key="2">
    <source>
        <dbReference type="UniProtKB" id="Q8N3I7"/>
    </source>
</evidence>
<evidence type="ECO:0000305" key="3"/>
<protein>
    <recommendedName>
        <fullName evidence="3">BBSome complex member BBS5</fullName>
    </recommendedName>
    <alternativeName>
        <fullName>Bardet-Biedl syndrome 5 protein homolog</fullName>
    </alternativeName>
</protein>
<organism>
    <name type="scientific">Xenopus laevis</name>
    <name type="common">African clawed frog</name>
    <dbReference type="NCBI Taxonomy" id="8355"/>
    <lineage>
        <taxon>Eukaryota</taxon>
        <taxon>Metazoa</taxon>
        <taxon>Chordata</taxon>
        <taxon>Craniata</taxon>
        <taxon>Vertebrata</taxon>
        <taxon>Euteleostomi</taxon>
        <taxon>Amphibia</taxon>
        <taxon>Batrachia</taxon>
        <taxon>Anura</taxon>
        <taxon>Pipoidea</taxon>
        <taxon>Pipidae</taxon>
        <taxon>Xenopodinae</taxon>
        <taxon>Xenopus</taxon>
        <taxon>Xenopus</taxon>
    </lineage>
</organism>
<proteinExistence type="evidence at transcript level"/>